<feature type="chain" id="PRO_1000115724" description="1-deoxy-D-xylulose-5-phosphate synthase">
    <location>
        <begin position="1"/>
        <end position="643"/>
    </location>
</feature>
<feature type="binding site" evidence="1">
    <location>
        <position position="78"/>
    </location>
    <ligand>
        <name>thiamine diphosphate</name>
        <dbReference type="ChEBI" id="CHEBI:58937"/>
    </ligand>
</feature>
<feature type="binding site" evidence="1">
    <location>
        <begin position="119"/>
        <end position="121"/>
    </location>
    <ligand>
        <name>thiamine diphosphate</name>
        <dbReference type="ChEBI" id="CHEBI:58937"/>
    </ligand>
</feature>
<feature type="binding site" evidence="1">
    <location>
        <position position="150"/>
    </location>
    <ligand>
        <name>Mg(2+)</name>
        <dbReference type="ChEBI" id="CHEBI:18420"/>
    </ligand>
</feature>
<feature type="binding site" evidence="1">
    <location>
        <begin position="151"/>
        <end position="152"/>
    </location>
    <ligand>
        <name>thiamine diphosphate</name>
        <dbReference type="ChEBI" id="CHEBI:58937"/>
    </ligand>
</feature>
<feature type="binding site" evidence="1">
    <location>
        <position position="179"/>
    </location>
    <ligand>
        <name>Mg(2+)</name>
        <dbReference type="ChEBI" id="CHEBI:18420"/>
    </ligand>
</feature>
<feature type="binding site" evidence="1">
    <location>
        <position position="179"/>
    </location>
    <ligand>
        <name>thiamine diphosphate</name>
        <dbReference type="ChEBI" id="CHEBI:58937"/>
    </ligand>
</feature>
<feature type="binding site" evidence="1">
    <location>
        <position position="288"/>
    </location>
    <ligand>
        <name>thiamine diphosphate</name>
        <dbReference type="ChEBI" id="CHEBI:58937"/>
    </ligand>
</feature>
<feature type="binding site" evidence="1">
    <location>
        <position position="370"/>
    </location>
    <ligand>
        <name>thiamine diphosphate</name>
        <dbReference type="ChEBI" id="CHEBI:58937"/>
    </ligand>
</feature>
<comment type="function">
    <text evidence="1">Catalyzes the acyloin condensation reaction between C atoms 2 and 3 of pyruvate and glyceraldehyde 3-phosphate to yield 1-deoxy-D-xylulose-5-phosphate (DXP).</text>
</comment>
<comment type="catalytic activity">
    <reaction evidence="1">
        <text>D-glyceraldehyde 3-phosphate + pyruvate + H(+) = 1-deoxy-D-xylulose 5-phosphate + CO2</text>
        <dbReference type="Rhea" id="RHEA:12605"/>
        <dbReference type="ChEBI" id="CHEBI:15361"/>
        <dbReference type="ChEBI" id="CHEBI:15378"/>
        <dbReference type="ChEBI" id="CHEBI:16526"/>
        <dbReference type="ChEBI" id="CHEBI:57792"/>
        <dbReference type="ChEBI" id="CHEBI:59776"/>
        <dbReference type="EC" id="2.2.1.7"/>
    </reaction>
</comment>
<comment type="cofactor">
    <cofactor evidence="1">
        <name>Mg(2+)</name>
        <dbReference type="ChEBI" id="CHEBI:18420"/>
    </cofactor>
    <text evidence="1">Binds 1 Mg(2+) ion per subunit.</text>
</comment>
<comment type="cofactor">
    <cofactor evidence="1">
        <name>thiamine diphosphate</name>
        <dbReference type="ChEBI" id="CHEBI:58937"/>
    </cofactor>
    <text evidence="1">Binds 1 thiamine pyrophosphate per subunit.</text>
</comment>
<comment type="pathway">
    <text evidence="1">Metabolic intermediate biosynthesis; 1-deoxy-D-xylulose 5-phosphate biosynthesis; 1-deoxy-D-xylulose 5-phosphate from D-glyceraldehyde 3-phosphate and pyruvate: step 1/1.</text>
</comment>
<comment type="subunit">
    <text evidence="1">Homodimer.</text>
</comment>
<comment type="similarity">
    <text evidence="1">Belongs to the transketolase family. DXPS subfamily.</text>
</comment>
<keyword id="KW-0414">Isoprene biosynthesis</keyword>
<keyword id="KW-0460">Magnesium</keyword>
<keyword id="KW-0479">Metal-binding</keyword>
<keyword id="KW-0784">Thiamine biosynthesis</keyword>
<keyword id="KW-0786">Thiamine pyrophosphate</keyword>
<keyword id="KW-0808">Transferase</keyword>
<evidence type="ECO:0000255" key="1">
    <source>
        <dbReference type="HAMAP-Rule" id="MF_00315"/>
    </source>
</evidence>
<protein>
    <recommendedName>
        <fullName evidence="1">1-deoxy-D-xylulose-5-phosphate synthase</fullName>
        <ecNumber evidence="1">2.2.1.7</ecNumber>
    </recommendedName>
    <alternativeName>
        <fullName evidence="1">1-deoxyxylulose-5-phosphate synthase</fullName>
        <shortName evidence="1">DXP synthase</shortName>
        <shortName evidence="1">DXPS</shortName>
    </alternativeName>
</protein>
<accession>B2S9T6</accession>
<proteinExistence type="inferred from homology"/>
<organism>
    <name type="scientific">Brucella abortus (strain S19)</name>
    <dbReference type="NCBI Taxonomy" id="430066"/>
    <lineage>
        <taxon>Bacteria</taxon>
        <taxon>Pseudomonadati</taxon>
        <taxon>Pseudomonadota</taxon>
        <taxon>Alphaproteobacteria</taxon>
        <taxon>Hyphomicrobiales</taxon>
        <taxon>Brucellaceae</taxon>
        <taxon>Brucella/Ochrobactrum group</taxon>
        <taxon>Brucella</taxon>
    </lineage>
</organism>
<sequence length="643" mass="69212">MSRPSTPLLDKAPTPDRLRALPEQDLPQLAEELRTELIDAVSTTGGHLGAGLGVVELTVALHHVFNTPYDRIIWDVGHQAYPHKILTGRRDRIRTLRQAGGLSGFTKRAESEYDPFGAAHSSTSISAGLGMAVASELSGEKRNVIAVIGDGSMSAGMAYEAMNNAGALDARLIVILNDNDMSIAPPTGAMSAYLARLVSGRTYRSVREAAKQVAQKLPKFLQDKARKSEEYARAFFTGGTLFEELGFYYVGPIDGHNLDHLLPVLKNVRDTQKGPVLIHVVTQKGKGYAPAEAAADKYHGVNKFDVITGKQAKPPANAPSYTKIFGTSLIEEARHDDKIVAVTAAMPTGTGLDLFGEAFPKRVFDVGIAEQHAVTFAAGLASEGYKPFCAIYSTFLQRGYDQVVHDVSIQNLPVRFPIDRAGLVGADGPTHAGSFDTGFLAALPGFVVMAASDEAELRHMVRTAAEYDEGPISFRYPRGDGVGVDLPERGSVLEIGKGRIVREGTKVALLSFGTRLQECLAAAEELGAAGLSTTVADARFAKPLDHDLIRRLAREHEVLVMVEEGAVGGFSSHVLQFLATDGLLDRGLKVRALMLPDIYQDHGKPDAMYAEAGLDRTGIVRTVFAALHRDELGHEALPTPFRA</sequence>
<name>DXS_BRUA1</name>
<dbReference type="EC" id="2.2.1.7" evidence="1"/>
<dbReference type="EMBL" id="CP000887">
    <property type="protein sequence ID" value="ACD71966.1"/>
    <property type="molecule type" value="Genomic_DNA"/>
</dbReference>
<dbReference type="RefSeq" id="WP_002968705.1">
    <property type="nucleotide sequence ID" value="NC_010742.1"/>
</dbReference>
<dbReference type="SMR" id="B2S9T6"/>
<dbReference type="KEGG" id="bmc:BAbS19_I04270"/>
<dbReference type="HOGENOM" id="CLU_009227_1_4_5"/>
<dbReference type="UniPathway" id="UPA00064">
    <property type="reaction ID" value="UER00091"/>
</dbReference>
<dbReference type="Proteomes" id="UP000002565">
    <property type="component" value="Chromosome 1"/>
</dbReference>
<dbReference type="GO" id="GO:0008661">
    <property type="term" value="F:1-deoxy-D-xylulose-5-phosphate synthase activity"/>
    <property type="evidence" value="ECO:0007669"/>
    <property type="project" value="UniProtKB-UniRule"/>
</dbReference>
<dbReference type="GO" id="GO:0000287">
    <property type="term" value="F:magnesium ion binding"/>
    <property type="evidence" value="ECO:0007669"/>
    <property type="project" value="UniProtKB-UniRule"/>
</dbReference>
<dbReference type="GO" id="GO:0030976">
    <property type="term" value="F:thiamine pyrophosphate binding"/>
    <property type="evidence" value="ECO:0007669"/>
    <property type="project" value="UniProtKB-UniRule"/>
</dbReference>
<dbReference type="GO" id="GO:0052865">
    <property type="term" value="P:1-deoxy-D-xylulose 5-phosphate biosynthetic process"/>
    <property type="evidence" value="ECO:0007669"/>
    <property type="project" value="UniProtKB-UniPathway"/>
</dbReference>
<dbReference type="GO" id="GO:0019682">
    <property type="term" value="P:glyceraldehyde-3-phosphate metabolic process"/>
    <property type="evidence" value="ECO:0007669"/>
    <property type="project" value="UniProtKB-ARBA"/>
</dbReference>
<dbReference type="GO" id="GO:0016114">
    <property type="term" value="P:terpenoid biosynthetic process"/>
    <property type="evidence" value="ECO:0007669"/>
    <property type="project" value="UniProtKB-UniRule"/>
</dbReference>
<dbReference type="GO" id="GO:0009228">
    <property type="term" value="P:thiamine biosynthetic process"/>
    <property type="evidence" value="ECO:0007669"/>
    <property type="project" value="UniProtKB-UniRule"/>
</dbReference>
<dbReference type="CDD" id="cd02007">
    <property type="entry name" value="TPP_DXS"/>
    <property type="match status" value="1"/>
</dbReference>
<dbReference type="CDD" id="cd07033">
    <property type="entry name" value="TPP_PYR_DXS_TK_like"/>
    <property type="match status" value="1"/>
</dbReference>
<dbReference type="FunFam" id="3.40.50.920:FF:000002">
    <property type="entry name" value="1-deoxy-D-xylulose-5-phosphate synthase"/>
    <property type="match status" value="1"/>
</dbReference>
<dbReference type="FunFam" id="3.40.50.970:FF:000005">
    <property type="entry name" value="1-deoxy-D-xylulose-5-phosphate synthase"/>
    <property type="match status" value="1"/>
</dbReference>
<dbReference type="Gene3D" id="3.40.50.920">
    <property type="match status" value="1"/>
</dbReference>
<dbReference type="Gene3D" id="3.40.50.970">
    <property type="match status" value="2"/>
</dbReference>
<dbReference type="HAMAP" id="MF_00315">
    <property type="entry name" value="DXP_synth"/>
    <property type="match status" value="1"/>
</dbReference>
<dbReference type="InterPro" id="IPR005477">
    <property type="entry name" value="Dxylulose-5-P_synthase"/>
</dbReference>
<dbReference type="InterPro" id="IPR029061">
    <property type="entry name" value="THDP-binding"/>
</dbReference>
<dbReference type="InterPro" id="IPR009014">
    <property type="entry name" value="Transketo_C/PFOR_II"/>
</dbReference>
<dbReference type="InterPro" id="IPR005475">
    <property type="entry name" value="Transketolase-like_Pyr-bd"/>
</dbReference>
<dbReference type="InterPro" id="IPR020826">
    <property type="entry name" value="Transketolase_BS"/>
</dbReference>
<dbReference type="InterPro" id="IPR033248">
    <property type="entry name" value="Transketolase_C"/>
</dbReference>
<dbReference type="InterPro" id="IPR049557">
    <property type="entry name" value="Transketolase_CS"/>
</dbReference>
<dbReference type="NCBIfam" id="TIGR00204">
    <property type="entry name" value="dxs"/>
    <property type="match status" value="1"/>
</dbReference>
<dbReference type="NCBIfam" id="NF003933">
    <property type="entry name" value="PRK05444.2-2"/>
    <property type="match status" value="1"/>
</dbReference>
<dbReference type="PANTHER" id="PTHR43322">
    <property type="entry name" value="1-D-DEOXYXYLULOSE 5-PHOSPHATE SYNTHASE-RELATED"/>
    <property type="match status" value="1"/>
</dbReference>
<dbReference type="PANTHER" id="PTHR43322:SF5">
    <property type="entry name" value="1-DEOXY-D-XYLULOSE-5-PHOSPHATE SYNTHASE, CHLOROPLASTIC"/>
    <property type="match status" value="1"/>
</dbReference>
<dbReference type="Pfam" id="PF13292">
    <property type="entry name" value="DXP_synthase_N"/>
    <property type="match status" value="1"/>
</dbReference>
<dbReference type="Pfam" id="PF02779">
    <property type="entry name" value="Transket_pyr"/>
    <property type="match status" value="1"/>
</dbReference>
<dbReference type="Pfam" id="PF02780">
    <property type="entry name" value="Transketolase_C"/>
    <property type="match status" value="1"/>
</dbReference>
<dbReference type="SMART" id="SM00861">
    <property type="entry name" value="Transket_pyr"/>
    <property type="match status" value="1"/>
</dbReference>
<dbReference type="SUPFAM" id="SSF52518">
    <property type="entry name" value="Thiamin diphosphate-binding fold (THDP-binding)"/>
    <property type="match status" value="2"/>
</dbReference>
<dbReference type="SUPFAM" id="SSF52922">
    <property type="entry name" value="TK C-terminal domain-like"/>
    <property type="match status" value="1"/>
</dbReference>
<dbReference type="PROSITE" id="PS00801">
    <property type="entry name" value="TRANSKETOLASE_1"/>
    <property type="match status" value="1"/>
</dbReference>
<dbReference type="PROSITE" id="PS00802">
    <property type="entry name" value="TRANSKETOLASE_2"/>
    <property type="match status" value="1"/>
</dbReference>
<reference key="1">
    <citation type="journal article" date="2008" name="PLoS ONE">
        <title>Genome sequence of Brucella abortus vaccine strain S19 compared to virulent strains yields candidate virulence genes.</title>
        <authorList>
            <person name="Crasta O.R."/>
            <person name="Folkerts O."/>
            <person name="Fei Z."/>
            <person name="Mane S.P."/>
            <person name="Evans C."/>
            <person name="Martino-Catt S."/>
            <person name="Bricker B."/>
            <person name="Yu G."/>
            <person name="Du L."/>
            <person name="Sobral B.W."/>
        </authorList>
    </citation>
    <scope>NUCLEOTIDE SEQUENCE [LARGE SCALE GENOMIC DNA]</scope>
    <source>
        <strain>S19</strain>
    </source>
</reference>
<gene>
    <name evidence="1" type="primary">dxs</name>
    <name type="ordered locus">BAbS19_I04270</name>
</gene>